<gene>
    <name evidence="1" type="primary">purT</name>
    <name type="ordered locus">RHA1_ro02245</name>
</gene>
<organism>
    <name type="scientific">Rhodococcus jostii (strain RHA1)</name>
    <dbReference type="NCBI Taxonomy" id="101510"/>
    <lineage>
        <taxon>Bacteria</taxon>
        <taxon>Bacillati</taxon>
        <taxon>Actinomycetota</taxon>
        <taxon>Actinomycetes</taxon>
        <taxon>Mycobacteriales</taxon>
        <taxon>Nocardiaceae</taxon>
        <taxon>Rhodococcus</taxon>
    </lineage>
</organism>
<reference key="1">
    <citation type="journal article" date="2006" name="Proc. Natl. Acad. Sci. U.S.A.">
        <title>The complete genome of Rhodococcus sp. RHA1 provides insights into a catabolic powerhouse.</title>
        <authorList>
            <person name="McLeod M.P."/>
            <person name="Warren R.L."/>
            <person name="Hsiao W.W.L."/>
            <person name="Araki N."/>
            <person name="Myhre M."/>
            <person name="Fernandes C."/>
            <person name="Miyazawa D."/>
            <person name="Wong W."/>
            <person name="Lillquist A.L."/>
            <person name="Wang D."/>
            <person name="Dosanjh M."/>
            <person name="Hara H."/>
            <person name="Petrescu A."/>
            <person name="Morin R.D."/>
            <person name="Yang G."/>
            <person name="Stott J.M."/>
            <person name="Schein J.E."/>
            <person name="Shin H."/>
            <person name="Smailus D."/>
            <person name="Siddiqui A.S."/>
            <person name="Marra M.A."/>
            <person name="Jones S.J.M."/>
            <person name="Holt R."/>
            <person name="Brinkman F.S.L."/>
            <person name="Miyauchi K."/>
            <person name="Fukuda M."/>
            <person name="Davies J.E."/>
            <person name="Mohn W.W."/>
            <person name="Eltis L.D."/>
        </authorList>
    </citation>
    <scope>NUCLEOTIDE SEQUENCE [LARGE SCALE GENOMIC DNA]</scope>
    <source>
        <strain>RHA1</strain>
    </source>
</reference>
<feature type="chain" id="PRO_0000319222" description="Formate-dependent phosphoribosylglycinamide formyltransferase">
    <location>
        <begin position="1"/>
        <end position="403"/>
    </location>
</feature>
<feature type="domain" description="ATP-grasp" evidence="1">
    <location>
        <begin position="125"/>
        <end position="319"/>
    </location>
</feature>
<feature type="region of interest" description="Disordered" evidence="2">
    <location>
        <begin position="382"/>
        <end position="403"/>
    </location>
</feature>
<feature type="compositionally biased region" description="Basic and acidic residues" evidence="2">
    <location>
        <begin position="386"/>
        <end position="397"/>
    </location>
</feature>
<feature type="binding site" evidence="1">
    <location>
        <begin position="27"/>
        <end position="28"/>
    </location>
    <ligand>
        <name>N(1)-(5-phospho-beta-D-ribosyl)glycinamide</name>
        <dbReference type="ChEBI" id="CHEBI:143788"/>
    </ligand>
</feature>
<feature type="binding site" evidence="1">
    <location>
        <position position="87"/>
    </location>
    <ligand>
        <name>N(1)-(5-phospho-beta-D-ribosyl)glycinamide</name>
        <dbReference type="ChEBI" id="CHEBI:143788"/>
    </ligand>
</feature>
<feature type="binding site" evidence="1">
    <location>
        <position position="120"/>
    </location>
    <ligand>
        <name>ATP</name>
        <dbReference type="ChEBI" id="CHEBI:30616"/>
    </ligand>
</feature>
<feature type="binding site" evidence="1">
    <location>
        <position position="161"/>
    </location>
    <ligand>
        <name>ATP</name>
        <dbReference type="ChEBI" id="CHEBI:30616"/>
    </ligand>
</feature>
<feature type="binding site" evidence="1">
    <location>
        <begin position="166"/>
        <end position="171"/>
    </location>
    <ligand>
        <name>ATP</name>
        <dbReference type="ChEBI" id="CHEBI:30616"/>
    </ligand>
</feature>
<feature type="binding site" evidence="1">
    <location>
        <begin position="201"/>
        <end position="204"/>
    </location>
    <ligand>
        <name>ATP</name>
        <dbReference type="ChEBI" id="CHEBI:30616"/>
    </ligand>
</feature>
<feature type="binding site" evidence="1">
    <location>
        <position position="209"/>
    </location>
    <ligand>
        <name>ATP</name>
        <dbReference type="ChEBI" id="CHEBI:30616"/>
    </ligand>
</feature>
<feature type="binding site" evidence="1">
    <location>
        <position position="278"/>
    </location>
    <ligand>
        <name>Mg(2+)</name>
        <dbReference type="ChEBI" id="CHEBI:18420"/>
    </ligand>
</feature>
<feature type="binding site" evidence="1">
    <location>
        <position position="290"/>
    </location>
    <ligand>
        <name>Mg(2+)</name>
        <dbReference type="ChEBI" id="CHEBI:18420"/>
    </ligand>
</feature>
<feature type="binding site" evidence="1">
    <location>
        <position position="297"/>
    </location>
    <ligand>
        <name>N(1)-(5-phospho-beta-D-ribosyl)glycinamide</name>
        <dbReference type="ChEBI" id="CHEBI:143788"/>
    </ligand>
</feature>
<feature type="binding site" evidence="1">
    <location>
        <position position="366"/>
    </location>
    <ligand>
        <name>N(1)-(5-phospho-beta-D-ribosyl)glycinamide</name>
        <dbReference type="ChEBI" id="CHEBI:143788"/>
    </ligand>
</feature>
<feature type="binding site" evidence="1">
    <location>
        <begin position="373"/>
        <end position="374"/>
    </location>
    <ligand>
        <name>N(1)-(5-phospho-beta-D-ribosyl)glycinamide</name>
        <dbReference type="ChEBI" id="CHEBI:143788"/>
    </ligand>
</feature>
<comment type="function">
    <text evidence="1">Involved in the de novo purine biosynthesis. Catalyzes the transfer of formate to 5-phospho-ribosyl-glycinamide (GAR), producing 5-phospho-ribosyl-N-formylglycinamide (FGAR). Formate is provided by PurU via hydrolysis of 10-formyl-tetrahydrofolate.</text>
</comment>
<comment type="catalytic activity">
    <reaction evidence="1">
        <text>N(1)-(5-phospho-beta-D-ribosyl)glycinamide + formate + ATP = N(2)-formyl-N(1)-(5-phospho-beta-D-ribosyl)glycinamide + ADP + phosphate + H(+)</text>
        <dbReference type="Rhea" id="RHEA:24829"/>
        <dbReference type="ChEBI" id="CHEBI:15378"/>
        <dbReference type="ChEBI" id="CHEBI:15740"/>
        <dbReference type="ChEBI" id="CHEBI:30616"/>
        <dbReference type="ChEBI" id="CHEBI:43474"/>
        <dbReference type="ChEBI" id="CHEBI:143788"/>
        <dbReference type="ChEBI" id="CHEBI:147286"/>
        <dbReference type="ChEBI" id="CHEBI:456216"/>
        <dbReference type="EC" id="6.3.1.21"/>
    </reaction>
    <physiologicalReaction direction="left-to-right" evidence="1">
        <dbReference type="Rhea" id="RHEA:24830"/>
    </physiologicalReaction>
</comment>
<comment type="pathway">
    <text evidence="1">Purine metabolism; IMP biosynthesis via de novo pathway; N(2)-formyl-N(1)-(5-phospho-D-ribosyl)glycinamide from N(1)-(5-phospho-D-ribosyl)glycinamide (formate route): step 1/1.</text>
</comment>
<comment type="subunit">
    <text evidence="1">Homodimer.</text>
</comment>
<comment type="similarity">
    <text evidence="1">Belongs to the PurK/PurT family.</text>
</comment>
<sequence>MREQAPVRFGTPLTAGATRVMLLGSGELGKEVIIALQRLGVEVIAVDRYDNAPGHQVAHRAHTIDMSDPEALLRLVEEERPHFVVPEIEAIATDALATVEERGTAVVIPTARATQLTMNREGIRRLAAEELGLPTSPYEFAESLEEVRAATERIGFPCVIKPVMSSSGKGQSTVRDTGGVETAWEYALAGGRINYGRVIVEGFVDFDYEITQLTVRAIGADGEVGTFFCEPIGHLQDSGDYVESWQPQPMSDAALARSREVAEKVTAALGGRGIFGVELFVKGDDVYFSEVSPRPHDTGLVTLRTQRLSEFELHARAILGLPVDTTLTTPGASAVIYGGVDATGIGFDGVADAMAVPETDLRLFGKPESFVRRRMGVAVSTGPDVETARSRAREAASRVEPVA</sequence>
<accession>Q0SEI4</accession>
<name>PURT_RHOJR</name>
<dbReference type="EC" id="6.3.1.21" evidence="1"/>
<dbReference type="EMBL" id="CP000431">
    <property type="protein sequence ID" value="ABG94052.1"/>
    <property type="molecule type" value="Genomic_DNA"/>
</dbReference>
<dbReference type="RefSeq" id="WP_011595036.1">
    <property type="nucleotide sequence ID" value="NC_008268.1"/>
</dbReference>
<dbReference type="SMR" id="Q0SEI4"/>
<dbReference type="KEGG" id="rha:RHA1_ro02245"/>
<dbReference type="PATRIC" id="fig|101510.16.peg.2273"/>
<dbReference type="eggNOG" id="COG0027">
    <property type="taxonomic scope" value="Bacteria"/>
</dbReference>
<dbReference type="HOGENOM" id="CLU_011534_1_3_11"/>
<dbReference type="OrthoDB" id="9804625at2"/>
<dbReference type="UniPathway" id="UPA00074">
    <property type="reaction ID" value="UER00127"/>
</dbReference>
<dbReference type="Proteomes" id="UP000008710">
    <property type="component" value="Chromosome"/>
</dbReference>
<dbReference type="GO" id="GO:0005829">
    <property type="term" value="C:cytosol"/>
    <property type="evidence" value="ECO:0007669"/>
    <property type="project" value="TreeGrafter"/>
</dbReference>
<dbReference type="GO" id="GO:0005524">
    <property type="term" value="F:ATP binding"/>
    <property type="evidence" value="ECO:0007669"/>
    <property type="project" value="UniProtKB-UniRule"/>
</dbReference>
<dbReference type="GO" id="GO:0000287">
    <property type="term" value="F:magnesium ion binding"/>
    <property type="evidence" value="ECO:0007669"/>
    <property type="project" value="InterPro"/>
</dbReference>
<dbReference type="GO" id="GO:0043815">
    <property type="term" value="F:phosphoribosylglycinamide formyltransferase 2 activity"/>
    <property type="evidence" value="ECO:0007669"/>
    <property type="project" value="UniProtKB-UniRule"/>
</dbReference>
<dbReference type="GO" id="GO:0004644">
    <property type="term" value="F:phosphoribosylglycinamide formyltransferase activity"/>
    <property type="evidence" value="ECO:0007669"/>
    <property type="project" value="InterPro"/>
</dbReference>
<dbReference type="GO" id="GO:0006189">
    <property type="term" value="P:'de novo' IMP biosynthetic process"/>
    <property type="evidence" value="ECO:0007669"/>
    <property type="project" value="UniProtKB-UniRule"/>
</dbReference>
<dbReference type="FunFam" id="3.30.1490.20:FF:000013">
    <property type="entry name" value="Formate-dependent phosphoribosylglycinamide formyltransferase"/>
    <property type="match status" value="1"/>
</dbReference>
<dbReference type="Gene3D" id="3.40.50.20">
    <property type="match status" value="1"/>
</dbReference>
<dbReference type="Gene3D" id="3.30.1490.20">
    <property type="entry name" value="ATP-grasp fold, A domain"/>
    <property type="match status" value="1"/>
</dbReference>
<dbReference type="Gene3D" id="3.30.470.20">
    <property type="entry name" value="ATP-grasp fold, B domain"/>
    <property type="match status" value="1"/>
</dbReference>
<dbReference type="HAMAP" id="MF_01643">
    <property type="entry name" value="PurT"/>
    <property type="match status" value="1"/>
</dbReference>
<dbReference type="InterPro" id="IPR011761">
    <property type="entry name" value="ATP-grasp"/>
</dbReference>
<dbReference type="InterPro" id="IPR003135">
    <property type="entry name" value="ATP-grasp_carboxylate-amine"/>
</dbReference>
<dbReference type="InterPro" id="IPR013815">
    <property type="entry name" value="ATP_grasp_subdomain_1"/>
</dbReference>
<dbReference type="InterPro" id="IPR016185">
    <property type="entry name" value="PreATP-grasp_dom_sf"/>
</dbReference>
<dbReference type="InterPro" id="IPR005862">
    <property type="entry name" value="PurT"/>
</dbReference>
<dbReference type="InterPro" id="IPR054350">
    <property type="entry name" value="PurT/PurK_preATP-grasp"/>
</dbReference>
<dbReference type="InterPro" id="IPR048740">
    <property type="entry name" value="PurT_C"/>
</dbReference>
<dbReference type="InterPro" id="IPR011054">
    <property type="entry name" value="Rudment_hybrid_motif"/>
</dbReference>
<dbReference type="NCBIfam" id="NF006766">
    <property type="entry name" value="PRK09288.1"/>
    <property type="match status" value="1"/>
</dbReference>
<dbReference type="NCBIfam" id="TIGR01142">
    <property type="entry name" value="purT"/>
    <property type="match status" value="1"/>
</dbReference>
<dbReference type="PANTHER" id="PTHR43055">
    <property type="entry name" value="FORMATE-DEPENDENT PHOSPHORIBOSYLGLYCINAMIDE FORMYLTRANSFERASE"/>
    <property type="match status" value="1"/>
</dbReference>
<dbReference type="PANTHER" id="PTHR43055:SF1">
    <property type="entry name" value="FORMATE-DEPENDENT PHOSPHORIBOSYLGLYCINAMIDE FORMYLTRANSFERASE"/>
    <property type="match status" value="1"/>
</dbReference>
<dbReference type="Pfam" id="PF02222">
    <property type="entry name" value="ATP-grasp"/>
    <property type="match status" value="1"/>
</dbReference>
<dbReference type="Pfam" id="PF21244">
    <property type="entry name" value="PurT_C"/>
    <property type="match status" value="1"/>
</dbReference>
<dbReference type="Pfam" id="PF22660">
    <property type="entry name" value="RS_preATP-grasp-like"/>
    <property type="match status" value="1"/>
</dbReference>
<dbReference type="SUPFAM" id="SSF56059">
    <property type="entry name" value="Glutathione synthetase ATP-binding domain-like"/>
    <property type="match status" value="1"/>
</dbReference>
<dbReference type="SUPFAM" id="SSF52440">
    <property type="entry name" value="PreATP-grasp domain"/>
    <property type="match status" value="1"/>
</dbReference>
<dbReference type="SUPFAM" id="SSF51246">
    <property type="entry name" value="Rudiment single hybrid motif"/>
    <property type="match status" value="1"/>
</dbReference>
<dbReference type="PROSITE" id="PS50975">
    <property type="entry name" value="ATP_GRASP"/>
    <property type="match status" value="1"/>
</dbReference>
<proteinExistence type="inferred from homology"/>
<evidence type="ECO:0000255" key="1">
    <source>
        <dbReference type="HAMAP-Rule" id="MF_01643"/>
    </source>
</evidence>
<evidence type="ECO:0000256" key="2">
    <source>
        <dbReference type="SAM" id="MobiDB-lite"/>
    </source>
</evidence>
<protein>
    <recommendedName>
        <fullName evidence="1">Formate-dependent phosphoribosylglycinamide formyltransferase</fullName>
        <ecNumber evidence="1">6.3.1.21</ecNumber>
    </recommendedName>
    <alternativeName>
        <fullName evidence="1">5'-phosphoribosylglycinamide transformylase 2</fullName>
    </alternativeName>
    <alternativeName>
        <fullName evidence="1">Formate-dependent GAR transformylase</fullName>
    </alternativeName>
    <alternativeName>
        <fullName evidence="1">GAR transformylase 2</fullName>
        <shortName evidence="1">GART 2</shortName>
    </alternativeName>
    <alternativeName>
        <fullName evidence="1">Non-folate glycinamide ribonucleotide transformylase</fullName>
    </alternativeName>
    <alternativeName>
        <fullName evidence="1">Phosphoribosylglycinamide formyltransferase 2</fullName>
    </alternativeName>
</protein>
<keyword id="KW-0067">ATP-binding</keyword>
<keyword id="KW-0436">Ligase</keyword>
<keyword id="KW-0460">Magnesium</keyword>
<keyword id="KW-0479">Metal-binding</keyword>
<keyword id="KW-0547">Nucleotide-binding</keyword>
<keyword id="KW-0658">Purine biosynthesis</keyword>